<dbReference type="EC" id="2.5.1.145" evidence="1"/>
<dbReference type="EMBL" id="CP000932">
    <property type="protein sequence ID" value="ACM63692.1"/>
    <property type="molecule type" value="Genomic_DNA"/>
</dbReference>
<dbReference type="RefSeq" id="WP_012661075.1">
    <property type="nucleotide sequence ID" value="NC_012039.1"/>
</dbReference>
<dbReference type="SMR" id="B9KF57"/>
<dbReference type="STRING" id="306263.Cla_0332"/>
<dbReference type="KEGG" id="cla:CLA_0332"/>
<dbReference type="PATRIC" id="fig|306263.5.peg.332"/>
<dbReference type="eggNOG" id="COG0682">
    <property type="taxonomic scope" value="Bacteria"/>
</dbReference>
<dbReference type="HOGENOM" id="CLU_013386_1_2_7"/>
<dbReference type="UniPathway" id="UPA00664"/>
<dbReference type="Proteomes" id="UP000007727">
    <property type="component" value="Chromosome"/>
</dbReference>
<dbReference type="GO" id="GO:0005886">
    <property type="term" value="C:plasma membrane"/>
    <property type="evidence" value="ECO:0007669"/>
    <property type="project" value="UniProtKB-SubCell"/>
</dbReference>
<dbReference type="GO" id="GO:0008961">
    <property type="term" value="F:phosphatidylglycerol-prolipoprotein diacylglyceryl transferase activity"/>
    <property type="evidence" value="ECO:0007669"/>
    <property type="project" value="UniProtKB-UniRule"/>
</dbReference>
<dbReference type="GO" id="GO:0042158">
    <property type="term" value="P:lipoprotein biosynthetic process"/>
    <property type="evidence" value="ECO:0007669"/>
    <property type="project" value="UniProtKB-UniRule"/>
</dbReference>
<dbReference type="HAMAP" id="MF_01147">
    <property type="entry name" value="Lgt"/>
    <property type="match status" value="1"/>
</dbReference>
<dbReference type="InterPro" id="IPR001640">
    <property type="entry name" value="Lgt"/>
</dbReference>
<dbReference type="NCBIfam" id="TIGR00544">
    <property type="entry name" value="lgt"/>
    <property type="match status" value="1"/>
</dbReference>
<dbReference type="PANTHER" id="PTHR30589:SF0">
    <property type="entry name" value="PHOSPHATIDYLGLYCEROL--PROLIPOPROTEIN DIACYLGLYCERYL TRANSFERASE"/>
    <property type="match status" value="1"/>
</dbReference>
<dbReference type="PANTHER" id="PTHR30589">
    <property type="entry name" value="PROLIPOPROTEIN DIACYLGLYCERYL TRANSFERASE"/>
    <property type="match status" value="1"/>
</dbReference>
<dbReference type="Pfam" id="PF01790">
    <property type="entry name" value="LGT"/>
    <property type="match status" value="1"/>
</dbReference>
<dbReference type="PROSITE" id="PS01311">
    <property type="entry name" value="LGT"/>
    <property type="match status" value="1"/>
</dbReference>
<reference key="1">
    <citation type="journal article" date="2008" name="Foodborne Pathog. Dis.">
        <title>The complete genome sequence and analysis of the human pathogen Campylobacter lari.</title>
        <authorList>
            <person name="Miller W.G."/>
            <person name="Wang G."/>
            <person name="Binnewies T.T."/>
            <person name="Parker C.T."/>
        </authorList>
    </citation>
    <scope>NUCLEOTIDE SEQUENCE [LARGE SCALE GENOMIC DNA]</scope>
    <source>
        <strain>RM2100 / D67 / ATCC BAA-1060</strain>
    </source>
</reference>
<sequence>MEFWQNIYVNFDVVAFEIFGLKVHWYGIMYVLALLVALMVAKYYAIKDNMGISKAMLDSYFIWVEIGVILGARIGYILIYDAHTLWYLTHPWQIFNPFYNGEFVGIRGMSYHGAVVGFLIATYAFCKKNKQNLWKYLDLVAISVPCGYIFGRIGNFLNQELFGRATEVPWGIYVDGILRHPSQLYEAFLEGFIVFIILLLIKKYKKYNGELIAYYTILYALARFVCEFFREPDFGIGFVAFGMSMGQILSLLMFLLGLFLSFYLRNIKKNL</sequence>
<gene>
    <name evidence="1" type="primary">lgt</name>
    <name type="ordered locus">Cla_0332</name>
</gene>
<keyword id="KW-0997">Cell inner membrane</keyword>
<keyword id="KW-1003">Cell membrane</keyword>
<keyword id="KW-0472">Membrane</keyword>
<keyword id="KW-1185">Reference proteome</keyword>
<keyword id="KW-0808">Transferase</keyword>
<keyword id="KW-0812">Transmembrane</keyword>
<keyword id="KW-1133">Transmembrane helix</keyword>
<evidence type="ECO:0000255" key="1">
    <source>
        <dbReference type="HAMAP-Rule" id="MF_01147"/>
    </source>
</evidence>
<organism>
    <name type="scientific">Campylobacter lari (strain RM2100 / D67 / ATCC BAA-1060)</name>
    <dbReference type="NCBI Taxonomy" id="306263"/>
    <lineage>
        <taxon>Bacteria</taxon>
        <taxon>Pseudomonadati</taxon>
        <taxon>Campylobacterota</taxon>
        <taxon>Epsilonproteobacteria</taxon>
        <taxon>Campylobacterales</taxon>
        <taxon>Campylobacteraceae</taxon>
        <taxon>Campylobacter</taxon>
    </lineage>
</organism>
<proteinExistence type="inferred from homology"/>
<protein>
    <recommendedName>
        <fullName evidence="1">Phosphatidylglycerol--prolipoprotein diacylglyceryl transferase</fullName>
        <ecNumber evidence="1">2.5.1.145</ecNumber>
    </recommendedName>
</protein>
<comment type="function">
    <text evidence="1">Catalyzes the transfer of the diacylglyceryl group from phosphatidylglycerol to the sulfhydryl group of the N-terminal cysteine of a prolipoprotein, the first step in the formation of mature lipoproteins.</text>
</comment>
<comment type="catalytic activity">
    <reaction evidence="1">
        <text>L-cysteinyl-[prolipoprotein] + a 1,2-diacyl-sn-glycero-3-phospho-(1'-sn-glycerol) = an S-1,2-diacyl-sn-glyceryl-L-cysteinyl-[prolipoprotein] + sn-glycerol 1-phosphate + H(+)</text>
        <dbReference type="Rhea" id="RHEA:56712"/>
        <dbReference type="Rhea" id="RHEA-COMP:14679"/>
        <dbReference type="Rhea" id="RHEA-COMP:14680"/>
        <dbReference type="ChEBI" id="CHEBI:15378"/>
        <dbReference type="ChEBI" id="CHEBI:29950"/>
        <dbReference type="ChEBI" id="CHEBI:57685"/>
        <dbReference type="ChEBI" id="CHEBI:64716"/>
        <dbReference type="ChEBI" id="CHEBI:140658"/>
        <dbReference type="EC" id="2.5.1.145"/>
    </reaction>
</comment>
<comment type="pathway">
    <text evidence="1">Protein modification; lipoprotein biosynthesis (diacylglyceryl transfer).</text>
</comment>
<comment type="subcellular location">
    <subcellularLocation>
        <location evidence="1">Cell inner membrane</location>
        <topology evidence="1">Multi-pass membrane protein</topology>
    </subcellularLocation>
</comment>
<comment type="similarity">
    <text evidence="1">Belongs to the Lgt family.</text>
</comment>
<accession>B9KF57</accession>
<feature type="chain" id="PRO_1000164130" description="Phosphatidylglycerol--prolipoprotein diacylglyceryl transferase">
    <location>
        <begin position="1"/>
        <end position="271"/>
    </location>
</feature>
<feature type="transmembrane region" description="Helical" evidence="1">
    <location>
        <begin position="18"/>
        <end position="38"/>
    </location>
</feature>
<feature type="transmembrane region" description="Helical" evidence="1">
    <location>
        <begin position="60"/>
        <end position="80"/>
    </location>
</feature>
<feature type="transmembrane region" description="Helical" evidence="1">
    <location>
        <begin position="103"/>
        <end position="123"/>
    </location>
</feature>
<feature type="transmembrane region" description="Helical" evidence="1">
    <location>
        <begin position="137"/>
        <end position="157"/>
    </location>
</feature>
<feature type="transmembrane region" description="Helical" evidence="1">
    <location>
        <begin position="181"/>
        <end position="201"/>
    </location>
</feature>
<feature type="transmembrane region" description="Helical" evidence="1">
    <location>
        <begin position="209"/>
        <end position="229"/>
    </location>
</feature>
<feature type="transmembrane region" description="Helical" evidence="1">
    <location>
        <begin position="236"/>
        <end position="256"/>
    </location>
</feature>
<feature type="binding site" evidence="1">
    <location>
        <position position="152"/>
    </location>
    <ligand>
        <name>a 1,2-diacyl-sn-glycero-3-phospho-(1'-sn-glycerol)</name>
        <dbReference type="ChEBI" id="CHEBI:64716"/>
    </ligand>
</feature>
<name>LGT_CAMLR</name>